<evidence type="ECO:0000250" key="1"/>
<evidence type="ECO:0000255" key="2">
    <source>
        <dbReference type="PROSITE-ProRule" id="PRU00085"/>
    </source>
</evidence>
<evidence type="ECO:0000269" key="3">
    <source>
    </source>
</evidence>
<evidence type="ECO:0000269" key="4">
    <source>
    </source>
</evidence>
<evidence type="ECO:0000305" key="5"/>
<accession>Q2FWZ8</accession>
<feature type="initiator methionine" description="Removed" evidence="3">
    <location>
        <position position="1"/>
    </location>
</feature>
<feature type="chain" id="PRO_0000295894" description="Bacterial non-heme ferritin">
    <location>
        <begin position="2"/>
        <end position="166"/>
    </location>
</feature>
<feature type="domain" description="Ferritin-like diiron" evidence="2">
    <location>
        <begin position="2"/>
        <end position="145"/>
    </location>
</feature>
<feature type="binding site" evidence="2">
    <location>
        <position position="17"/>
    </location>
    <ligand>
        <name>Fe cation</name>
        <dbReference type="ChEBI" id="CHEBI:24875"/>
        <label>1</label>
    </ligand>
</feature>
<feature type="binding site" evidence="2">
    <location>
        <position position="50"/>
    </location>
    <ligand>
        <name>Fe cation</name>
        <dbReference type="ChEBI" id="CHEBI:24875"/>
        <label>1</label>
    </ligand>
</feature>
<feature type="binding site" evidence="2">
    <location>
        <position position="50"/>
    </location>
    <ligand>
        <name>Fe cation</name>
        <dbReference type="ChEBI" id="CHEBI:24875"/>
        <label>2</label>
    </ligand>
</feature>
<feature type="binding site" evidence="2">
    <location>
        <position position="53"/>
    </location>
    <ligand>
        <name>Fe cation</name>
        <dbReference type="ChEBI" id="CHEBI:24875"/>
        <label>1</label>
    </ligand>
</feature>
<feature type="binding site" evidence="2">
    <location>
        <position position="94"/>
    </location>
    <ligand>
        <name>Fe cation</name>
        <dbReference type="ChEBI" id="CHEBI:24875"/>
        <label>2</label>
    </ligand>
</feature>
<feature type="binding site" evidence="2">
    <location>
        <position position="127"/>
    </location>
    <ligand>
        <name>Fe cation</name>
        <dbReference type="ChEBI" id="CHEBI:24875"/>
        <label>2</label>
    </ligand>
</feature>
<proteinExistence type="evidence at protein level"/>
<dbReference type="EC" id="1.16.3.2"/>
<dbReference type="EMBL" id="CP000253">
    <property type="protein sequence ID" value="ABD31158.1"/>
    <property type="molecule type" value="Genomic_DNA"/>
</dbReference>
<dbReference type="RefSeq" id="WP_000949467.1">
    <property type="nucleotide sequence ID" value="NZ_LS483365.1"/>
</dbReference>
<dbReference type="RefSeq" id="YP_500600.1">
    <property type="nucleotide sequence ID" value="NC_007795.1"/>
</dbReference>
<dbReference type="SMR" id="Q2FWZ8"/>
<dbReference type="STRING" id="93061.SAOUHSC_02108"/>
<dbReference type="PaxDb" id="1280-SAXN108_1991"/>
<dbReference type="GeneID" id="3921180"/>
<dbReference type="KEGG" id="sao:SAOUHSC_02108"/>
<dbReference type="PATRIC" id="fig|93061.5.peg.1913"/>
<dbReference type="eggNOG" id="COG1528">
    <property type="taxonomic scope" value="Bacteria"/>
</dbReference>
<dbReference type="HOGENOM" id="CLU_065681_1_2_9"/>
<dbReference type="OrthoDB" id="9801481at2"/>
<dbReference type="PRO" id="PR:Q2FWZ8"/>
<dbReference type="Proteomes" id="UP000008816">
    <property type="component" value="Chromosome"/>
</dbReference>
<dbReference type="GO" id="GO:0005737">
    <property type="term" value="C:cytoplasm"/>
    <property type="evidence" value="ECO:0000318"/>
    <property type="project" value="GO_Central"/>
</dbReference>
<dbReference type="GO" id="GO:0005829">
    <property type="term" value="C:cytosol"/>
    <property type="evidence" value="ECO:0000318"/>
    <property type="project" value="GO_Central"/>
</dbReference>
<dbReference type="GO" id="GO:0008199">
    <property type="term" value="F:ferric iron binding"/>
    <property type="evidence" value="ECO:0000318"/>
    <property type="project" value="GO_Central"/>
</dbReference>
<dbReference type="GO" id="GO:0008198">
    <property type="term" value="F:ferrous iron binding"/>
    <property type="evidence" value="ECO:0000318"/>
    <property type="project" value="GO_Central"/>
</dbReference>
<dbReference type="GO" id="GO:0004322">
    <property type="term" value="F:ferroxidase activity"/>
    <property type="evidence" value="ECO:0000318"/>
    <property type="project" value="GO_Central"/>
</dbReference>
<dbReference type="GO" id="GO:0006879">
    <property type="term" value="P:intracellular iron ion homeostasis"/>
    <property type="evidence" value="ECO:0007669"/>
    <property type="project" value="UniProtKB-KW"/>
</dbReference>
<dbReference type="GO" id="GO:0006826">
    <property type="term" value="P:iron ion transport"/>
    <property type="evidence" value="ECO:0007669"/>
    <property type="project" value="InterPro"/>
</dbReference>
<dbReference type="CDD" id="cd01055">
    <property type="entry name" value="Nonheme_Ferritin"/>
    <property type="match status" value="1"/>
</dbReference>
<dbReference type="FunFam" id="1.20.1260.10:FF:000001">
    <property type="entry name" value="Non-heme ferritin"/>
    <property type="match status" value="1"/>
</dbReference>
<dbReference type="Gene3D" id="1.20.1260.10">
    <property type="match status" value="1"/>
</dbReference>
<dbReference type="InterPro" id="IPR001519">
    <property type="entry name" value="Ferritin"/>
</dbReference>
<dbReference type="InterPro" id="IPR012347">
    <property type="entry name" value="Ferritin-like"/>
</dbReference>
<dbReference type="InterPro" id="IPR009040">
    <property type="entry name" value="Ferritin-like_diiron"/>
</dbReference>
<dbReference type="InterPro" id="IPR009078">
    <property type="entry name" value="Ferritin-like_SF"/>
</dbReference>
<dbReference type="InterPro" id="IPR008331">
    <property type="entry name" value="Ferritin_DPS_dom"/>
</dbReference>
<dbReference type="InterPro" id="IPR041719">
    <property type="entry name" value="Ferritin_prok"/>
</dbReference>
<dbReference type="PANTHER" id="PTHR11431:SF127">
    <property type="entry name" value="BACTERIAL NON-HEME FERRITIN"/>
    <property type="match status" value="1"/>
</dbReference>
<dbReference type="PANTHER" id="PTHR11431">
    <property type="entry name" value="FERRITIN"/>
    <property type="match status" value="1"/>
</dbReference>
<dbReference type="Pfam" id="PF00210">
    <property type="entry name" value="Ferritin"/>
    <property type="match status" value="1"/>
</dbReference>
<dbReference type="SUPFAM" id="SSF47240">
    <property type="entry name" value="Ferritin-like"/>
    <property type="match status" value="1"/>
</dbReference>
<dbReference type="PROSITE" id="PS50905">
    <property type="entry name" value="FERRITIN_LIKE"/>
    <property type="match status" value="1"/>
</dbReference>
<protein>
    <recommendedName>
        <fullName>Bacterial non-heme ferritin</fullName>
        <ecNumber>1.16.3.2</ecNumber>
    </recommendedName>
</protein>
<sequence length="166" mass="19589">MLSKNLLEALNDQMNHEYFAAHAYMAMAAYCDKESYEGFANFFIQQAKEERFHGQKIYNYINDRGAHAEFRAVSAPKIDFSSILETFKDSLSQEQEVTRRFYNLSEIARQDKDYATISFLNWFLDEQVEEESMFETHINYLTRIGDDSNALYLYEKELGARTFDEE</sequence>
<keyword id="KW-0963">Cytoplasm</keyword>
<keyword id="KW-0903">Direct protein sequencing</keyword>
<keyword id="KW-0408">Iron</keyword>
<keyword id="KW-0409">Iron storage</keyword>
<keyword id="KW-0479">Metal-binding</keyword>
<keyword id="KW-0560">Oxidoreductase</keyword>
<keyword id="KW-1185">Reference proteome</keyword>
<reference key="1">
    <citation type="book" date="2006" name="Gram positive pathogens, 2nd edition">
        <title>The Staphylococcus aureus NCTC 8325 genome.</title>
        <editorList>
            <person name="Fischetti V."/>
            <person name="Novick R."/>
            <person name="Ferretti J."/>
            <person name="Portnoy D."/>
            <person name="Rood J."/>
        </editorList>
        <authorList>
            <person name="Gillaspy A.F."/>
            <person name="Worrell V."/>
            <person name="Orvis J."/>
            <person name="Roe B.A."/>
            <person name="Dyer D.W."/>
            <person name="Iandolo J.J."/>
        </authorList>
    </citation>
    <scope>NUCLEOTIDE SEQUENCE [LARGE SCALE GENOMIC DNA]</scope>
    <source>
        <strain>NCTC 8325 / PS 47</strain>
    </source>
</reference>
<reference key="2">
    <citation type="journal article" date="2001" name="Infect. Immun.">
        <title>PerR controls oxidative stress resistance and iron storage proteins and is required for virulence in Staphylococcus aureus.</title>
        <authorList>
            <person name="Horsburgh M.J."/>
            <person name="Clements M.O."/>
            <person name="Crossley H."/>
            <person name="Ingham E."/>
            <person name="Foster S.J."/>
        </authorList>
    </citation>
    <scope>PROTEIN SEQUENCE OF 2-10</scope>
    <scope>REGULATION BY PERR</scope>
</reference>
<reference key="3">
    <citation type="journal article" date="2004" name="Infect. Immun.">
        <title>The staphylococcal ferritins are differentially regulated in response to iron and manganese and via perR and fur.</title>
        <authorList>
            <person name="Morrissey J.A."/>
            <person name="Cockayne A."/>
            <person name="Brummell K."/>
            <person name="Williams P."/>
        </authorList>
    </citation>
    <scope>INDUCTION BY IRON</scope>
    <scope>REGULATION BY PERR AND FUR</scope>
</reference>
<gene>
    <name type="primary">ftnA</name>
    <name type="ordered locus">SAOUHSC_02108</name>
</gene>
<name>FTN_STAA8</name>
<comment type="function">
    <text evidence="1">Iron-storage protein.</text>
</comment>
<comment type="catalytic activity">
    <reaction>
        <text>4 Fe(2+) + O2 + 6 H2O = 4 iron(III) oxide-hydroxide + 12 H(+)</text>
        <dbReference type="Rhea" id="RHEA:11972"/>
        <dbReference type="ChEBI" id="CHEBI:15377"/>
        <dbReference type="ChEBI" id="CHEBI:15378"/>
        <dbReference type="ChEBI" id="CHEBI:15379"/>
        <dbReference type="ChEBI" id="CHEBI:29033"/>
        <dbReference type="ChEBI" id="CHEBI:78619"/>
        <dbReference type="EC" id="1.16.3.2"/>
    </reaction>
</comment>
<comment type="subcellular location">
    <subcellularLocation>
        <location evidence="1">Cytoplasm</location>
    </subcellularLocation>
</comment>
<comment type="induction">
    <text evidence="4">Induced by iron. Repressed by PerR. Negatively regulated by Fur. In addition, is regulated in a PerR-independent way under metal-depleted conditions.</text>
</comment>
<comment type="similarity">
    <text evidence="5">Belongs to the ferritin family. Prokaryotic subfamily.</text>
</comment>
<organism>
    <name type="scientific">Staphylococcus aureus (strain NCTC 8325 / PS 47)</name>
    <dbReference type="NCBI Taxonomy" id="93061"/>
    <lineage>
        <taxon>Bacteria</taxon>
        <taxon>Bacillati</taxon>
        <taxon>Bacillota</taxon>
        <taxon>Bacilli</taxon>
        <taxon>Bacillales</taxon>
        <taxon>Staphylococcaceae</taxon>
        <taxon>Staphylococcus</taxon>
    </lineage>
</organism>